<feature type="chain" id="PRO_0000060895" description="Cytochrome b">
    <location>
        <begin position="1"/>
        <end position="378"/>
    </location>
</feature>
<feature type="transmembrane region" description="Helical" evidence="2">
    <location>
        <begin position="34"/>
        <end position="54"/>
    </location>
</feature>
<feature type="transmembrane region" description="Helical" evidence="2">
    <location>
        <begin position="78"/>
        <end position="99"/>
    </location>
</feature>
<feature type="transmembrane region" description="Helical" evidence="2">
    <location>
        <begin position="114"/>
        <end position="134"/>
    </location>
</feature>
<feature type="transmembrane region" description="Helical" evidence="2">
    <location>
        <begin position="179"/>
        <end position="199"/>
    </location>
</feature>
<feature type="transmembrane region" description="Helical" evidence="2">
    <location>
        <begin position="227"/>
        <end position="247"/>
    </location>
</feature>
<feature type="transmembrane region" description="Helical" evidence="2">
    <location>
        <begin position="289"/>
        <end position="309"/>
    </location>
</feature>
<feature type="transmembrane region" description="Helical" evidence="2">
    <location>
        <begin position="321"/>
        <end position="341"/>
    </location>
</feature>
<feature type="transmembrane region" description="Helical" evidence="2">
    <location>
        <begin position="348"/>
        <end position="368"/>
    </location>
</feature>
<feature type="binding site" description="axial binding residue" evidence="2">
    <location>
        <position position="84"/>
    </location>
    <ligand>
        <name>heme b</name>
        <dbReference type="ChEBI" id="CHEBI:60344"/>
        <label>b562</label>
    </ligand>
    <ligandPart>
        <name>Fe</name>
        <dbReference type="ChEBI" id="CHEBI:18248"/>
    </ligandPart>
</feature>
<feature type="binding site" description="axial binding residue" evidence="2">
    <location>
        <position position="98"/>
    </location>
    <ligand>
        <name>heme b</name>
        <dbReference type="ChEBI" id="CHEBI:60344"/>
        <label>b566</label>
    </ligand>
    <ligandPart>
        <name>Fe</name>
        <dbReference type="ChEBI" id="CHEBI:18248"/>
    </ligandPart>
</feature>
<feature type="binding site" description="axial binding residue" evidence="2">
    <location>
        <position position="183"/>
    </location>
    <ligand>
        <name>heme b</name>
        <dbReference type="ChEBI" id="CHEBI:60344"/>
        <label>b562</label>
    </ligand>
    <ligandPart>
        <name>Fe</name>
        <dbReference type="ChEBI" id="CHEBI:18248"/>
    </ligandPart>
</feature>
<feature type="binding site" description="axial binding residue" evidence="2">
    <location>
        <position position="197"/>
    </location>
    <ligand>
        <name>heme b</name>
        <dbReference type="ChEBI" id="CHEBI:60344"/>
        <label>b566</label>
    </ligand>
    <ligandPart>
        <name>Fe</name>
        <dbReference type="ChEBI" id="CHEBI:18248"/>
    </ligandPart>
</feature>
<feature type="binding site" evidence="2">
    <location>
        <position position="202"/>
    </location>
    <ligand>
        <name>a ubiquinone</name>
        <dbReference type="ChEBI" id="CHEBI:16389"/>
    </ligand>
</feature>
<protein>
    <recommendedName>
        <fullName>Cytochrome b</fullName>
    </recommendedName>
    <alternativeName>
        <fullName>Complex III subunit 3</fullName>
    </alternativeName>
    <alternativeName>
        <fullName>Complex III subunit III</fullName>
    </alternativeName>
    <alternativeName>
        <fullName>Cytochrome b-c1 complex subunit 3</fullName>
    </alternativeName>
    <alternativeName>
        <fullName>Ubiquinol-cytochrome-c reductase complex cytochrome b subunit</fullName>
    </alternativeName>
</protein>
<evidence type="ECO:0000250" key="1"/>
<evidence type="ECO:0000250" key="2">
    <source>
        <dbReference type="UniProtKB" id="P00157"/>
    </source>
</evidence>
<evidence type="ECO:0000250" key="3">
    <source>
        <dbReference type="UniProtKB" id="P00163"/>
    </source>
</evidence>
<evidence type="ECO:0000255" key="4">
    <source>
        <dbReference type="PROSITE-ProRule" id="PRU00967"/>
    </source>
</evidence>
<evidence type="ECO:0000255" key="5">
    <source>
        <dbReference type="PROSITE-ProRule" id="PRU00968"/>
    </source>
</evidence>
<evidence type="ECO:0000305" key="6"/>
<evidence type="ECO:0000312" key="7">
    <source>
        <dbReference type="EMBL" id="AAF77288.1"/>
    </source>
</evidence>
<evidence type="ECO:0000312" key="8">
    <source>
        <dbReference type="Proteomes" id="UP000001292"/>
    </source>
</evidence>
<proteinExistence type="inferred from homology"/>
<accession>Q9MGL5</accession>
<accession>Q9MI08</accession>
<organism evidence="7">
    <name type="scientific">Drosophila sechellia</name>
    <name type="common">Fruit fly</name>
    <dbReference type="NCBI Taxonomy" id="7238"/>
    <lineage>
        <taxon>Eukaryota</taxon>
        <taxon>Metazoa</taxon>
        <taxon>Ecdysozoa</taxon>
        <taxon>Arthropoda</taxon>
        <taxon>Hexapoda</taxon>
        <taxon>Insecta</taxon>
        <taxon>Pterygota</taxon>
        <taxon>Neoptera</taxon>
        <taxon>Endopterygota</taxon>
        <taxon>Diptera</taxon>
        <taxon>Brachycera</taxon>
        <taxon>Muscomorpha</taxon>
        <taxon>Ephydroidea</taxon>
        <taxon>Drosophilidae</taxon>
        <taxon>Drosophila</taxon>
        <taxon>Sophophora</taxon>
    </lineage>
</organism>
<dbReference type="EMBL" id="AF200832">
    <property type="protein sequence ID" value="AAF77288.1"/>
    <property type="molecule type" value="Genomic_DNA"/>
</dbReference>
<dbReference type="EMBL" id="AF164589">
    <property type="protein sequence ID" value="AAF81388.1"/>
    <property type="molecule type" value="Genomic_DNA"/>
</dbReference>
<dbReference type="RefSeq" id="NP_982320.1">
    <property type="nucleotide sequence ID" value="NC_005780.1"/>
</dbReference>
<dbReference type="SMR" id="Q9MGL5"/>
<dbReference type="STRING" id="7238.Q9MGL5"/>
<dbReference type="GeneID" id="2760940"/>
<dbReference type="KEGG" id="dse:2760940"/>
<dbReference type="CTD" id="4519"/>
<dbReference type="ChiTaRS" id="Cyt-b5-r">
    <property type="organism name" value="fly"/>
</dbReference>
<dbReference type="Proteomes" id="UP000001292">
    <property type="component" value="Mitochondrion"/>
</dbReference>
<dbReference type="GO" id="GO:0005743">
    <property type="term" value="C:mitochondrial inner membrane"/>
    <property type="evidence" value="ECO:0007669"/>
    <property type="project" value="UniProtKB-SubCell"/>
</dbReference>
<dbReference type="GO" id="GO:0045275">
    <property type="term" value="C:respiratory chain complex III"/>
    <property type="evidence" value="ECO:0007669"/>
    <property type="project" value="InterPro"/>
</dbReference>
<dbReference type="GO" id="GO:0046872">
    <property type="term" value="F:metal ion binding"/>
    <property type="evidence" value="ECO:0007669"/>
    <property type="project" value="UniProtKB-KW"/>
</dbReference>
<dbReference type="GO" id="GO:0008121">
    <property type="term" value="F:ubiquinol-cytochrome-c reductase activity"/>
    <property type="evidence" value="ECO:0007669"/>
    <property type="project" value="InterPro"/>
</dbReference>
<dbReference type="GO" id="GO:0006122">
    <property type="term" value="P:mitochondrial electron transport, ubiquinol to cytochrome c"/>
    <property type="evidence" value="ECO:0007669"/>
    <property type="project" value="TreeGrafter"/>
</dbReference>
<dbReference type="CDD" id="cd00290">
    <property type="entry name" value="cytochrome_b_C"/>
    <property type="match status" value="1"/>
</dbReference>
<dbReference type="CDD" id="cd00284">
    <property type="entry name" value="Cytochrome_b_N"/>
    <property type="match status" value="1"/>
</dbReference>
<dbReference type="FunFam" id="1.20.810.10:FF:000002">
    <property type="entry name" value="Cytochrome b"/>
    <property type="match status" value="1"/>
</dbReference>
<dbReference type="Gene3D" id="1.20.810.10">
    <property type="entry name" value="Cytochrome Bc1 Complex, Chain C"/>
    <property type="match status" value="1"/>
</dbReference>
<dbReference type="InterPro" id="IPR005798">
    <property type="entry name" value="Cyt_b/b6_C"/>
</dbReference>
<dbReference type="InterPro" id="IPR036150">
    <property type="entry name" value="Cyt_b/b6_C_sf"/>
</dbReference>
<dbReference type="InterPro" id="IPR005797">
    <property type="entry name" value="Cyt_b/b6_N"/>
</dbReference>
<dbReference type="InterPro" id="IPR027387">
    <property type="entry name" value="Cytb/b6-like_sf"/>
</dbReference>
<dbReference type="InterPro" id="IPR030689">
    <property type="entry name" value="Cytochrome_b"/>
</dbReference>
<dbReference type="InterPro" id="IPR048260">
    <property type="entry name" value="Cytochrome_b_C_euk/bac"/>
</dbReference>
<dbReference type="InterPro" id="IPR048259">
    <property type="entry name" value="Cytochrome_b_N_euk/bac"/>
</dbReference>
<dbReference type="InterPro" id="IPR016174">
    <property type="entry name" value="Di-haem_cyt_TM"/>
</dbReference>
<dbReference type="PANTHER" id="PTHR19271">
    <property type="entry name" value="CYTOCHROME B"/>
    <property type="match status" value="1"/>
</dbReference>
<dbReference type="PANTHER" id="PTHR19271:SF16">
    <property type="entry name" value="CYTOCHROME B"/>
    <property type="match status" value="1"/>
</dbReference>
<dbReference type="Pfam" id="PF00032">
    <property type="entry name" value="Cytochrom_B_C"/>
    <property type="match status" value="1"/>
</dbReference>
<dbReference type="Pfam" id="PF00033">
    <property type="entry name" value="Cytochrome_B"/>
    <property type="match status" value="1"/>
</dbReference>
<dbReference type="PIRSF" id="PIRSF038885">
    <property type="entry name" value="COB"/>
    <property type="match status" value="1"/>
</dbReference>
<dbReference type="SUPFAM" id="SSF81648">
    <property type="entry name" value="a domain/subunit of cytochrome bc1 complex (Ubiquinol-cytochrome c reductase)"/>
    <property type="match status" value="1"/>
</dbReference>
<dbReference type="SUPFAM" id="SSF81342">
    <property type="entry name" value="Transmembrane di-heme cytochromes"/>
    <property type="match status" value="1"/>
</dbReference>
<dbReference type="PROSITE" id="PS51003">
    <property type="entry name" value="CYTB_CTER"/>
    <property type="match status" value="1"/>
</dbReference>
<dbReference type="PROSITE" id="PS51002">
    <property type="entry name" value="CYTB_NTER"/>
    <property type="match status" value="1"/>
</dbReference>
<gene>
    <name type="primary">mt:Cyt-b</name>
    <name type="synonym">Cob</name>
    <name type="synonym">cytb</name>
</gene>
<name>CYB_DROSE</name>
<reference key="1">
    <citation type="journal article" date="2000" name="J. Mol. Evol.">
        <title>Comparative genomics of mitochondrial DNA in members of the Drosophila melanogaster subgroup.</title>
        <authorList>
            <person name="Ballard J.W.O."/>
        </authorList>
    </citation>
    <scope>NUCLEOTIDE SEQUENCE [LARGE SCALE GENOMIC DNA]</scope>
    <source>
        <strain evidence="8">Rob3c / Tucson 14021-0248.25</strain>
    </source>
</reference>
<reference evidence="6" key="2">
    <citation type="journal article" date="2003" name="Mol. Phylogenet. Evol.">
        <title>Macroevolutionary relationships of species of Drosophila melanogaster group based on mtDNA sequences.</title>
        <authorList>
            <person name="Kastanis P."/>
            <person name="Eliopoulos E."/>
            <person name="Goulielmos G.N."/>
            <person name="Tsakas S."/>
            <person name="Loukas M."/>
        </authorList>
    </citation>
    <scope>NUCLEOTIDE SEQUENCE [GENOMIC DNA] OF 352-378</scope>
</reference>
<geneLocation type="mitochondrion" evidence="7"/>
<keyword id="KW-0249">Electron transport</keyword>
<keyword id="KW-0349">Heme</keyword>
<keyword id="KW-0408">Iron</keyword>
<keyword id="KW-0472">Membrane</keyword>
<keyword id="KW-0479">Metal-binding</keyword>
<keyword id="KW-0496">Mitochondrion</keyword>
<keyword id="KW-0999">Mitochondrion inner membrane</keyword>
<keyword id="KW-1185">Reference proteome</keyword>
<keyword id="KW-0679">Respiratory chain</keyword>
<keyword id="KW-0812">Transmembrane</keyword>
<keyword id="KW-1133">Transmembrane helix</keyword>
<keyword id="KW-0813">Transport</keyword>
<keyword id="KW-0830">Ubiquinone</keyword>
<comment type="function">
    <text evidence="2">Component of the ubiquinol-cytochrome c reductase complex (complex III or cytochrome b-c1 complex) that is part of the mitochondrial respiratory chain. The b-c1 complex mediates electron transfer from ubiquinol to cytochrome c. Contributes to the generation of a proton gradient across the mitochondrial membrane that is then used for ATP synthesis.</text>
</comment>
<comment type="cofactor">
    <cofactor evidence="2">
        <name>heme b</name>
        <dbReference type="ChEBI" id="CHEBI:60344"/>
    </cofactor>
    <text evidence="2">Binds 2 heme b groups non-covalently.</text>
</comment>
<comment type="subunit">
    <text evidence="2">The main subunits of complex b-c1 are: cytochrome b, cytochrome c1 and the Rieske protein.</text>
</comment>
<comment type="subcellular location">
    <subcellularLocation>
        <location evidence="3">Mitochondrion inner membrane</location>
        <topology evidence="3">Multi-pass membrane protein</topology>
    </subcellularLocation>
</comment>
<comment type="miscellaneous">
    <text evidence="1">Heme 1 (or BL or b562) is low-potential and absorbs at about 562 nm, and heme 2 (or BH or b566) is high-potential and absorbs at about 566 nm.</text>
</comment>
<comment type="similarity">
    <text evidence="4 5 6">Belongs to the cytochrome b family.</text>
</comment>
<comment type="caution">
    <text evidence="2">The full-length protein contains only eight transmembrane helices, not nine as predicted by bioinformatics tools.</text>
</comment>
<sequence length="378" mass="43142">MNKPLRNSHPLFKIANNALVDLPAPINISSWWNFGSLLGLCLIIQILTGLFLAMHYTADINLAFYSVNHICRDVNYGWLLRTLHANGASFFFICIYLHVGRGIYYGSYMFTPTWLIGVIILFLVMGTAFMGYVLPWGQMSFWGATVITNLLSAIPYLGMDLVQWLWGGFAVDNATLTRFFTFHFILPFIVLAMTMIHLLFLHQTGSNNPIGLNSNIDKIPFHPYFTFKDIVGFTVMIFILISLVLISPNLLGDPDNFIPANPLVTPAHIQPEWYFLFAYAILRSIPNKLGGVIALVLSIAILMILPFYNLSKFRGIQFYPINQVMFWSMLVTVILLTWIGARPVEEPYVLIGQILTVMYFLYYLVNPLITKWWDNLLN</sequence>